<comment type="function">
    <text evidence="1">F(1)F(0) ATP synthase produces ATP from ADP in the presence of a proton or sodium gradient. F-type ATPases consist of two structural domains, F(1) containing the extramembraneous catalytic core and F(0) containing the membrane proton channel, linked together by a central stalk and a peripheral stalk. During catalysis, ATP synthesis in the catalytic domain of F(1) is coupled via a rotary mechanism of the central stalk subunits to proton translocation.</text>
</comment>
<comment type="function">
    <text evidence="1">This protein is part of the stalk that links CF(0) to CF(1). It either transmits conformational changes from CF(0) to CF(1) or is implicated in proton conduction.</text>
</comment>
<comment type="subunit">
    <text evidence="1">F-type ATPases have 2 components, F(1) - the catalytic core - and F(0) - the membrane proton channel. F(1) has five subunits: alpha(3), beta(3), gamma(1), delta(1), epsilon(1). F(0) has three main subunits: a(1), b(2) and c(10-14). The alpha and beta chains form an alternating ring which encloses part of the gamma chain. F(1) is attached to F(0) by a central stalk formed by the gamma and epsilon chains, while a peripheral stalk is formed by the delta and b chains.</text>
</comment>
<comment type="subcellular location">
    <subcellularLocation>
        <location evidence="1">Cell membrane</location>
        <topology evidence="1">Peripheral membrane protein</topology>
    </subcellularLocation>
</comment>
<comment type="similarity">
    <text evidence="1">Belongs to the ATPase delta chain family.</text>
</comment>
<accession>Q5WB75</accession>
<keyword id="KW-0066">ATP synthesis</keyword>
<keyword id="KW-1003">Cell membrane</keyword>
<keyword id="KW-0139">CF(1)</keyword>
<keyword id="KW-0375">Hydrogen ion transport</keyword>
<keyword id="KW-0406">Ion transport</keyword>
<keyword id="KW-0472">Membrane</keyword>
<keyword id="KW-1185">Reference proteome</keyword>
<keyword id="KW-0813">Transport</keyword>
<sequence length="181" mass="19799">MSNKAVANRYAVALFELAEEKGQTDVFERELELVQEVFETTPQLETVLAQPGLAADKKQALLRDAFQAHLSPAVMNTINLLMERGRYSEIVGLAGEYKQLNDDKKGIAEATVFSVKALSDSEKNQIAAVFAPKAGKRELRVVNVVDSALIGGLKVRVGDRVFDGSIQGQLKRLEKQLVAGQ</sequence>
<organism>
    <name type="scientific">Shouchella clausii (strain KSM-K16)</name>
    <name type="common">Alkalihalobacillus clausii</name>
    <dbReference type="NCBI Taxonomy" id="66692"/>
    <lineage>
        <taxon>Bacteria</taxon>
        <taxon>Bacillati</taxon>
        <taxon>Bacillota</taxon>
        <taxon>Bacilli</taxon>
        <taxon>Bacillales</taxon>
        <taxon>Bacillaceae</taxon>
        <taxon>Shouchella</taxon>
    </lineage>
</organism>
<gene>
    <name evidence="1" type="primary">atpH</name>
    <name type="ordered locus">ABC3854</name>
</gene>
<feature type="chain" id="PRO_0000370891" description="ATP synthase subunit delta">
    <location>
        <begin position="1"/>
        <end position="181"/>
    </location>
</feature>
<protein>
    <recommendedName>
        <fullName evidence="1">ATP synthase subunit delta</fullName>
    </recommendedName>
    <alternativeName>
        <fullName evidence="1">ATP synthase F(1) sector subunit delta</fullName>
    </alternativeName>
    <alternativeName>
        <fullName evidence="1">F-type ATPase subunit delta</fullName>
        <shortName evidence="1">F-ATPase subunit delta</shortName>
    </alternativeName>
</protein>
<evidence type="ECO:0000255" key="1">
    <source>
        <dbReference type="HAMAP-Rule" id="MF_01416"/>
    </source>
</evidence>
<reference key="1">
    <citation type="submission" date="2003-10" db="EMBL/GenBank/DDBJ databases">
        <title>The complete genome sequence of the alkaliphilic Bacillus clausii KSM-K16.</title>
        <authorList>
            <person name="Takaki Y."/>
            <person name="Kageyama Y."/>
            <person name="Shimamura S."/>
            <person name="Suzuki H."/>
            <person name="Nishi S."/>
            <person name="Hatada Y."/>
            <person name="Kawai S."/>
            <person name="Ito S."/>
            <person name="Horikoshi K."/>
        </authorList>
    </citation>
    <scope>NUCLEOTIDE SEQUENCE [LARGE SCALE GENOMIC DNA]</scope>
    <source>
        <strain>KSM-K16</strain>
    </source>
</reference>
<name>ATPD_SHOC1</name>
<proteinExistence type="inferred from homology"/>
<dbReference type="EMBL" id="AP006627">
    <property type="protein sequence ID" value="BAD66385.1"/>
    <property type="molecule type" value="Genomic_DNA"/>
</dbReference>
<dbReference type="RefSeq" id="WP_011248688.1">
    <property type="nucleotide sequence ID" value="NC_006582.1"/>
</dbReference>
<dbReference type="SMR" id="Q5WB75"/>
<dbReference type="STRING" id="66692.ABC3854"/>
<dbReference type="KEGG" id="bcl:ABC3854"/>
<dbReference type="eggNOG" id="COG0712">
    <property type="taxonomic scope" value="Bacteria"/>
</dbReference>
<dbReference type="HOGENOM" id="CLU_085114_4_1_9"/>
<dbReference type="OrthoDB" id="9802471at2"/>
<dbReference type="Proteomes" id="UP000001168">
    <property type="component" value="Chromosome"/>
</dbReference>
<dbReference type="GO" id="GO:0005886">
    <property type="term" value="C:plasma membrane"/>
    <property type="evidence" value="ECO:0007669"/>
    <property type="project" value="UniProtKB-SubCell"/>
</dbReference>
<dbReference type="GO" id="GO:0045259">
    <property type="term" value="C:proton-transporting ATP synthase complex"/>
    <property type="evidence" value="ECO:0007669"/>
    <property type="project" value="UniProtKB-KW"/>
</dbReference>
<dbReference type="GO" id="GO:0046933">
    <property type="term" value="F:proton-transporting ATP synthase activity, rotational mechanism"/>
    <property type="evidence" value="ECO:0007669"/>
    <property type="project" value="UniProtKB-UniRule"/>
</dbReference>
<dbReference type="Gene3D" id="1.10.520.20">
    <property type="entry name" value="N-terminal domain of the delta subunit of the F1F0-ATP synthase"/>
    <property type="match status" value="1"/>
</dbReference>
<dbReference type="HAMAP" id="MF_01416">
    <property type="entry name" value="ATP_synth_delta_bact"/>
    <property type="match status" value="1"/>
</dbReference>
<dbReference type="InterPro" id="IPR026015">
    <property type="entry name" value="ATP_synth_OSCP/delta_N_sf"/>
</dbReference>
<dbReference type="InterPro" id="IPR020781">
    <property type="entry name" value="ATPase_OSCP/d_CS"/>
</dbReference>
<dbReference type="InterPro" id="IPR000711">
    <property type="entry name" value="ATPase_OSCP/dsu"/>
</dbReference>
<dbReference type="NCBIfam" id="TIGR01145">
    <property type="entry name" value="ATP_synt_delta"/>
    <property type="match status" value="1"/>
</dbReference>
<dbReference type="NCBIfam" id="NF004403">
    <property type="entry name" value="PRK05758.2-4"/>
    <property type="match status" value="1"/>
</dbReference>
<dbReference type="PANTHER" id="PTHR11910">
    <property type="entry name" value="ATP SYNTHASE DELTA CHAIN"/>
    <property type="match status" value="1"/>
</dbReference>
<dbReference type="Pfam" id="PF00213">
    <property type="entry name" value="OSCP"/>
    <property type="match status" value="1"/>
</dbReference>
<dbReference type="PRINTS" id="PR00125">
    <property type="entry name" value="ATPASEDELTA"/>
</dbReference>
<dbReference type="SUPFAM" id="SSF47928">
    <property type="entry name" value="N-terminal domain of the delta subunit of the F1F0-ATP synthase"/>
    <property type="match status" value="1"/>
</dbReference>
<dbReference type="PROSITE" id="PS00389">
    <property type="entry name" value="ATPASE_DELTA"/>
    <property type="match status" value="1"/>
</dbReference>